<feature type="chain" id="PRO_0000130470" description="Large ribosomal subunit protein uL29">
    <location>
        <begin position="1"/>
        <end position="68"/>
    </location>
</feature>
<proteinExistence type="inferred from homology"/>
<name>RL29_STRP1</name>
<reference key="1">
    <citation type="journal article" date="2001" name="Proc. Natl. Acad. Sci. U.S.A.">
        <title>Complete genome sequence of an M1 strain of Streptococcus pyogenes.</title>
        <authorList>
            <person name="Ferretti J.J."/>
            <person name="McShan W.M."/>
            <person name="Ajdic D.J."/>
            <person name="Savic D.J."/>
            <person name="Savic G."/>
            <person name="Lyon K."/>
            <person name="Primeaux C."/>
            <person name="Sezate S."/>
            <person name="Suvorov A.N."/>
            <person name="Kenton S."/>
            <person name="Lai H.S."/>
            <person name="Lin S.P."/>
            <person name="Qian Y."/>
            <person name="Jia H.G."/>
            <person name="Najar F.Z."/>
            <person name="Ren Q."/>
            <person name="Zhu H."/>
            <person name="Song L."/>
            <person name="White J."/>
            <person name="Yuan X."/>
            <person name="Clifton S.W."/>
            <person name="Roe B.A."/>
            <person name="McLaughlin R.E."/>
        </authorList>
    </citation>
    <scope>NUCLEOTIDE SEQUENCE [LARGE SCALE GENOMIC DNA]</scope>
    <source>
        <strain>ATCC 700294 / SF370 / Serotype M1</strain>
    </source>
</reference>
<reference key="2">
    <citation type="journal article" date="2005" name="J. Infect. Dis.">
        <title>Evolutionary origin and emergence of a highly successful clone of serotype M1 group A Streptococcus involved multiple horizontal gene transfer events.</title>
        <authorList>
            <person name="Sumby P."/>
            <person name="Porcella S.F."/>
            <person name="Madrigal A.G."/>
            <person name="Barbian K.D."/>
            <person name="Virtaneva K."/>
            <person name="Ricklefs S.M."/>
            <person name="Sturdevant D.E."/>
            <person name="Graham M.R."/>
            <person name="Vuopio-Varkila J."/>
            <person name="Hoe N.P."/>
            <person name="Musser J.M."/>
        </authorList>
    </citation>
    <scope>NUCLEOTIDE SEQUENCE [LARGE SCALE GENOMIC DNA]</scope>
    <source>
        <strain>ATCC BAA-947 / MGAS5005 / Serotype M1</strain>
    </source>
</reference>
<sequence length="68" mass="7962">MKLQEIKDFVKELRGLSQEELAKKENELKKELFDLRFQAAAGQLEKTARLDEVKKQIARVKTVQSEMK</sequence>
<dbReference type="EMBL" id="AE004092">
    <property type="protein sequence ID" value="AAK33190.1"/>
    <property type="molecule type" value="Genomic_DNA"/>
</dbReference>
<dbReference type="EMBL" id="CP000017">
    <property type="protein sequence ID" value="AAZ50671.1"/>
    <property type="molecule type" value="Genomic_DNA"/>
</dbReference>
<dbReference type="RefSeq" id="NP_268468.1">
    <property type="nucleotide sequence ID" value="NC_002737.2"/>
</dbReference>
<dbReference type="SMR" id="P66176"/>
<dbReference type="PaxDb" id="1314-HKU360_00085"/>
<dbReference type="KEGG" id="spy:SPy_0059"/>
<dbReference type="KEGG" id="spz:M5005_Spy0052"/>
<dbReference type="PATRIC" id="fig|160490.10.peg.52"/>
<dbReference type="HOGENOM" id="CLU_158491_5_2_9"/>
<dbReference type="OMA" id="RFQMATS"/>
<dbReference type="PRO" id="PR:P66176"/>
<dbReference type="Proteomes" id="UP000000750">
    <property type="component" value="Chromosome"/>
</dbReference>
<dbReference type="GO" id="GO:0022625">
    <property type="term" value="C:cytosolic large ribosomal subunit"/>
    <property type="evidence" value="ECO:0007669"/>
    <property type="project" value="TreeGrafter"/>
</dbReference>
<dbReference type="GO" id="GO:0003735">
    <property type="term" value="F:structural constituent of ribosome"/>
    <property type="evidence" value="ECO:0007669"/>
    <property type="project" value="InterPro"/>
</dbReference>
<dbReference type="GO" id="GO:0006412">
    <property type="term" value="P:translation"/>
    <property type="evidence" value="ECO:0007669"/>
    <property type="project" value="UniProtKB-UniRule"/>
</dbReference>
<dbReference type="CDD" id="cd00427">
    <property type="entry name" value="Ribosomal_L29_HIP"/>
    <property type="match status" value="1"/>
</dbReference>
<dbReference type="FunFam" id="1.10.287.310:FF:000001">
    <property type="entry name" value="50S ribosomal protein L29"/>
    <property type="match status" value="1"/>
</dbReference>
<dbReference type="Gene3D" id="1.10.287.310">
    <property type="match status" value="1"/>
</dbReference>
<dbReference type="HAMAP" id="MF_00374">
    <property type="entry name" value="Ribosomal_uL29"/>
    <property type="match status" value="1"/>
</dbReference>
<dbReference type="InterPro" id="IPR050063">
    <property type="entry name" value="Ribosomal_protein_uL29"/>
</dbReference>
<dbReference type="InterPro" id="IPR001854">
    <property type="entry name" value="Ribosomal_uL29"/>
</dbReference>
<dbReference type="InterPro" id="IPR018254">
    <property type="entry name" value="Ribosomal_uL29_CS"/>
</dbReference>
<dbReference type="InterPro" id="IPR036049">
    <property type="entry name" value="Ribosomal_uL29_sf"/>
</dbReference>
<dbReference type="NCBIfam" id="TIGR00012">
    <property type="entry name" value="L29"/>
    <property type="match status" value="1"/>
</dbReference>
<dbReference type="PANTHER" id="PTHR10916">
    <property type="entry name" value="60S RIBOSOMAL PROTEIN L35/50S RIBOSOMAL PROTEIN L29"/>
    <property type="match status" value="1"/>
</dbReference>
<dbReference type="PANTHER" id="PTHR10916:SF0">
    <property type="entry name" value="LARGE RIBOSOMAL SUBUNIT PROTEIN UL29C"/>
    <property type="match status" value="1"/>
</dbReference>
<dbReference type="Pfam" id="PF00831">
    <property type="entry name" value="Ribosomal_L29"/>
    <property type="match status" value="1"/>
</dbReference>
<dbReference type="SUPFAM" id="SSF46561">
    <property type="entry name" value="Ribosomal protein L29 (L29p)"/>
    <property type="match status" value="1"/>
</dbReference>
<dbReference type="PROSITE" id="PS00579">
    <property type="entry name" value="RIBOSOMAL_L29"/>
    <property type="match status" value="1"/>
</dbReference>
<gene>
    <name evidence="1" type="primary">rpmC</name>
    <name type="ordered locus">SPy_0059</name>
    <name type="ordered locus">M5005_Spy0052</name>
</gene>
<evidence type="ECO:0000255" key="1">
    <source>
        <dbReference type="HAMAP-Rule" id="MF_00374"/>
    </source>
</evidence>
<evidence type="ECO:0000305" key="2"/>
<accession>P66176</accession>
<accession>Q491P7</accession>
<accession>Q9A1W6</accession>
<protein>
    <recommendedName>
        <fullName evidence="1">Large ribosomal subunit protein uL29</fullName>
    </recommendedName>
    <alternativeName>
        <fullName evidence="2">50S ribosomal protein L29</fullName>
    </alternativeName>
</protein>
<comment type="similarity">
    <text evidence="1">Belongs to the universal ribosomal protein uL29 family.</text>
</comment>
<keyword id="KW-1185">Reference proteome</keyword>
<keyword id="KW-0687">Ribonucleoprotein</keyword>
<keyword id="KW-0689">Ribosomal protein</keyword>
<organism>
    <name type="scientific">Streptococcus pyogenes serotype M1</name>
    <dbReference type="NCBI Taxonomy" id="301447"/>
    <lineage>
        <taxon>Bacteria</taxon>
        <taxon>Bacillati</taxon>
        <taxon>Bacillota</taxon>
        <taxon>Bacilli</taxon>
        <taxon>Lactobacillales</taxon>
        <taxon>Streptococcaceae</taxon>
        <taxon>Streptococcus</taxon>
    </lineage>
</organism>